<reference key="1">
    <citation type="journal article" date="2007" name="Genome Res.">
        <title>Reductive evolution and niche adaptation inferred from the genome of Mycobacterium ulcerans, the causative agent of Buruli ulcer.</title>
        <authorList>
            <person name="Stinear T.P."/>
            <person name="Seemann T."/>
            <person name="Pidot S."/>
            <person name="Frigui W."/>
            <person name="Reysset G."/>
            <person name="Garnier T."/>
            <person name="Meurice G."/>
            <person name="Simon D."/>
            <person name="Bouchier C."/>
            <person name="Ma L."/>
            <person name="Tichit M."/>
            <person name="Porter J.L."/>
            <person name="Ryan J."/>
            <person name="Johnson P.D.R."/>
            <person name="Davies J.K."/>
            <person name="Jenkin G.A."/>
            <person name="Small P.L.C."/>
            <person name="Jones L.M."/>
            <person name="Tekaia F."/>
            <person name="Laval F."/>
            <person name="Daffe M."/>
            <person name="Parkhill J."/>
            <person name="Cole S.T."/>
        </authorList>
    </citation>
    <scope>NUCLEOTIDE SEQUENCE [LARGE SCALE GENOMIC DNA]</scope>
    <source>
        <strain>Agy99</strain>
    </source>
</reference>
<feature type="chain" id="PRO_1000024593" description="ATP-dependent Clp protease ATP-binding subunit ClpX">
    <location>
        <begin position="1"/>
        <end position="426"/>
    </location>
</feature>
<feature type="domain" description="ClpX-type ZB" evidence="2">
    <location>
        <begin position="1"/>
        <end position="54"/>
    </location>
</feature>
<feature type="binding site" evidence="2">
    <location>
        <position position="13"/>
    </location>
    <ligand>
        <name>Zn(2+)</name>
        <dbReference type="ChEBI" id="CHEBI:29105"/>
    </ligand>
</feature>
<feature type="binding site" evidence="2">
    <location>
        <position position="16"/>
    </location>
    <ligand>
        <name>Zn(2+)</name>
        <dbReference type="ChEBI" id="CHEBI:29105"/>
    </ligand>
</feature>
<feature type="binding site" evidence="2">
    <location>
        <position position="35"/>
    </location>
    <ligand>
        <name>Zn(2+)</name>
        <dbReference type="ChEBI" id="CHEBI:29105"/>
    </ligand>
</feature>
<feature type="binding site" evidence="2">
    <location>
        <position position="38"/>
    </location>
    <ligand>
        <name>Zn(2+)</name>
        <dbReference type="ChEBI" id="CHEBI:29105"/>
    </ligand>
</feature>
<feature type="binding site" evidence="1">
    <location>
        <begin position="122"/>
        <end position="129"/>
    </location>
    <ligand>
        <name>ATP</name>
        <dbReference type="ChEBI" id="CHEBI:30616"/>
    </ligand>
</feature>
<gene>
    <name evidence="1" type="primary">clpX</name>
    <name type="ordered locus">MUL_3728</name>
</gene>
<name>CLPX_MYCUA</name>
<protein>
    <recommendedName>
        <fullName evidence="1">ATP-dependent Clp protease ATP-binding subunit ClpX</fullName>
    </recommendedName>
</protein>
<accession>A0PU31</accession>
<evidence type="ECO:0000255" key="1">
    <source>
        <dbReference type="HAMAP-Rule" id="MF_00175"/>
    </source>
</evidence>
<evidence type="ECO:0000255" key="2">
    <source>
        <dbReference type="PROSITE-ProRule" id="PRU01250"/>
    </source>
</evidence>
<dbReference type="EMBL" id="CP000325">
    <property type="protein sequence ID" value="ABL05850.1"/>
    <property type="molecule type" value="Genomic_DNA"/>
</dbReference>
<dbReference type="RefSeq" id="WP_011741455.1">
    <property type="nucleotide sequence ID" value="NC_008611.1"/>
</dbReference>
<dbReference type="SMR" id="A0PU31"/>
<dbReference type="KEGG" id="mul:MUL_3728"/>
<dbReference type="eggNOG" id="COG1219">
    <property type="taxonomic scope" value="Bacteria"/>
</dbReference>
<dbReference type="HOGENOM" id="CLU_014218_8_2_11"/>
<dbReference type="Proteomes" id="UP000000765">
    <property type="component" value="Chromosome"/>
</dbReference>
<dbReference type="GO" id="GO:0009376">
    <property type="term" value="C:HslUV protease complex"/>
    <property type="evidence" value="ECO:0007669"/>
    <property type="project" value="TreeGrafter"/>
</dbReference>
<dbReference type="GO" id="GO:0005524">
    <property type="term" value="F:ATP binding"/>
    <property type="evidence" value="ECO:0007669"/>
    <property type="project" value="UniProtKB-UniRule"/>
</dbReference>
<dbReference type="GO" id="GO:0016887">
    <property type="term" value="F:ATP hydrolysis activity"/>
    <property type="evidence" value="ECO:0007669"/>
    <property type="project" value="InterPro"/>
</dbReference>
<dbReference type="GO" id="GO:0140662">
    <property type="term" value="F:ATP-dependent protein folding chaperone"/>
    <property type="evidence" value="ECO:0007669"/>
    <property type="project" value="InterPro"/>
</dbReference>
<dbReference type="GO" id="GO:0046983">
    <property type="term" value="F:protein dimerization activity"/>
    <property type="evidence" value="ECO:0007669"/>
    <property type="project" value="InterPro"/>
</dbReference>
<dbReference type="GO" id="GO:0051082">
    <property type="term" value="F:unfolded protein binding"/>
    <property type="evidence" value="ECO:0007669"/>
    <property type="project" value="UniProtKB-UniRule"/>
</dbReference>
<dbReference type="GO" id="GO:0008270">
    <property type="term" value="F:zinc ion binding"/>
    <property type="evidence" value="ECO:0007669"/>
    <property type="project" value="InterPro"/>
</dbReference>
<dbReference type="GO" id="GO:0051301">
    <property type="term" value="P:cell division"/>
    <property type="evidence" value="ECO:0007669"/>
    <property type="project" value="TreeGrafter"/>
</dbReference>
<dbReference type="GO" id="GO:0051603">
    <property type="term" value="P:proteolysis involved in protein catabolic process"/>
    <property type="evidence" value="ECO:0007669"/>
    <property type="project" value="TreeGrafter"/>
</dbReference>
<dbReference type="CDD" id="cd19497">
    <property type="entry name" value="RecA-like_ClpX"/>
    <property type="match status" value="1"/>
</dbReference>
<dbReference type="FunFam" id="1.10.8.60:FF:000002">
    <property type="entry name" value="ATP-dependent Clp protease ATP-binding subunit ClpX"/>
    <property type="match status" value="1"/>
</dbReference>
<dbReference type="FunFam" id="3.40.50.300:FF:000005">
    <property type="entry name" value="ATP-dependent Clp protease ATP-binding subunit ClpX"/>
    <property type="match status" value="1"/>
</dbReference>
<dbReference type="Gene3D" id="1.10.8.60">
    <property type="match status" value="1"/>
</dbReference>
<dbReference type="Gene3D" id="6.20.220.10">
    <property type="entry name" value="ClpX chaperone, C4-type zinc finger domain"/>
    <property type="match status" value="1"/>
</dbReference>
<dbReference type="Gene3D" id="3.40.50.300">
    <property type="entry name" value="P-loop containing nucleotide triphosphate hydrolases"/>
    <property type="match status" value="1"/>
</dbReference>
<dbReference type="HAMAP" id="MF_00175">
    <property type="entry name" value="ClpX"/>
    <property type="match status" value="1"/>
</dbReference>
<dbReference type="InterPro" id="IPR003593">
    <property type="entry name" value="AAA+_ATPase"/>
</dbReference>
<dbReference type="InterPro" id="IPR050052">
    <property type="entry name" value="ATP-dep_Clp_protease_ClpX"/>
</dbReference>
<dbReference type="InterPro" id="IPR003959">
    <property type="entry name" value="ATPase_AAA_core"/>
</dbReference>
<dbReference type="InterPro" id="IPR019489">
    <property type="entry name" value="Clp_ATPase_C"/>
</dbReference>
<dbReference type="InterPro" id="IPR004487">
    <property type="entry name" value="Clp_protease_ATP-bd_su_ClpX"/>
</dbReference>
<dbReference type="InterPro" id="IPR046425">
    <property type="entry name" value="ClpX_bact"/>
</dbReference>
<dbReference type="InterPro" id="IPR027417">
    <property type="entry name" value="P-loop_NTPase"/>
</dbReference>
<dbReference type="InterPro" id="IPR010603">
    <property type="entry name" value="Znf_CppX_C4"/>
</dbReference>
<dbReference type="InterPro" id="IPR038366">
    <property type="entry name" value="Znf_CppX_C4_sf"/>
</dbReference>
<dbReference type="NCBIfam" id="TIGR00382">
    <property type="entry name" value="clpX"/>
    <property type="match status" value="1"/>
</dbReference>
<dbReference type="NCBIfam" id="NF003745">
    <property type="entry name" value="PRK05342.1"/>
    <property type="match status" value="1"/>
</dbReference>
<dbReference type="PANTHER" id="PTHR48102:SF7">
    <property type="entry name" value="ATP-DEPENDENT CLP PROTEASE ATP-BINDING SUBUNIT CLPX-LIKE, MITOCHONDRIAL"/>
    <property type="match status" value="1"/>
</dbReference>
<dbReference type="PANTHER" id="PTHR48102">
    <property type="entry name" value="ATP-DEPENDENT CLP PROTEASE ATP-BINDING SUBUNIT CLPX-LIKE, MITOCHONDRIAL-RELATED"/>
    <property type="match status" value="1"/>
</dbReference>
<dbReference type="Pfam" id="PF07724">
    <property type="entry name" value="AAA_2"/>
    <property type="match status" value="1"/>
</dbReference>
<dbReference type="Pfam" id="PF10431">
    <property type="entry name" value="ClpB_D2-small"/>
    <property type="match status" value="1"/>
</dbReference>
<dbReference type="Pfam" id="PF06689">
    <property type="entry name" value="zf-C4_ClpX"/>
    <property type="match status" value="1"/>
</dbReference>
<dbReference type="SMART" id="SM00382">
    <property type="entry name" value="AAA"/>
    <property type="match status" value="1"/>
</dbReference>
<dbReference type="SMART" id="SM01086">
    <property type="entry name" value="ClpB_D2-small"/>
    <property type="match status" value="1"/>
</dbReference>
<dbReference type="SMART" id="SM00994">
    <property type="entry name" value="zf-C4_ClpX"/>
    <property type="match status" value="1"/>
</dbReference>
<dbReference type="SUPFAM" id="SSF57716">
    <property type="entry name" value="Glucocorticoid receptor-like (DNA-binding domain)"/>
    <property type="match status" value="1"/>
</dbReference>
<dbReference type="SUPFAM" id="SSF52540">
    <property type="entry name" value="P-loop containing nucleoside triphosphate hydrolases"/>
    <property type="match status" value="1"/>
</dbReference>
<dbReference type="PROSITE" id="PS51902">
    <property type="entry name" value="CLPX_ZB"/>
    <property type="match status" value="1"/>
</dbReference>
<organism>
    <name type="scientific">Mycobacterium ulcerans (strain Agy99)</name>
    <dbReference type="NCBI Taxonomy" id="362242"/>
    <lineage>
        <taxon>Bacteria</taxon>
        <taxon>Bacillati</taxon>
        <taxon>Actinomycetota</taxon>
        <taxon>Actinomycetes</taxon>
        <taxon>Mycobacteriales</taxon>
        <taxon>Mycobacteriaceae</taxon>
        <taxon>Mycobacterium</taxon>
        <taxon>Mycobacterium ulcerans group</taxon>
    </lineage>
</organism>
<proteinExistence type="inferred from homology"/>
<keyword id="KW-0067">ATP-binding</keyword>
<keyword id="KW-0143">Chaperone</keyword>
<keyword id="KW-0479">Metal-binding</keyword>
<keyword id="KW-0547">Nucleotide-binding</keyword>
<keyword id="KW-0862">Zinc</keyword>
<comment type="function">
    <text evidence="1">ATP-dependent specificity component of the Clp protease. It directs the protease to specific substrates. Can perform chaperone functions in the absence of ClpP.</text>
</comment>
<comment type="subunit">
    <text evidence="1">Component of the ClpX-ClpP complex. Forms a hexameric ring that, in the presence of ATP, binds to fourteen ClpP subunits assembled into a disk-like structure with a central cavity, resembling the structure of eukaryotic proteasomes.</text>
</comment>
<comment type="similarity">
    <text evidence="1">Belongs to the ClpX chaperone family.</text>
</comment>
<sequence>MARIGDGGDLLKCSFCGKSQKQVKKLIAGPGVYICDECIDLCNEIIEEELADADDVKLDELPKPVEIREFLEGYVIGQDTAKRTLAVAVYNHYKRIQAGEKSHDSRCEAVELTKSNILMLGPTGCGKTYLAQTLAKMLNVPFAIADATALTEAGYVGEDVENILLKLIQAADYDVKRAETGIIYIDEVDKIARKSENPSITRDVSGEGVQQALLKILEGTQASVPPQGGRKHPHQEFIQIDTTNVLFIVAGAFAGLEKIIYERVGKRGLGFGAEVRSKAEIDTTDHFAEVMPEDLIKFGLIPEFIGRLPVVASVTNLDKESLVKILSEPKNALVKQYTRLFEMDGVELEFTDDALEAIADQAIHRGTGARGLRAIMEEVLLPVMYDIPSRDDVAKVVVTKETVQDNVLPTIVPRKPSRSERRDKSA</sequence>